<name>KV3AB_MOUSE</name>
<feature type="chain" id="PRO_0000059785" description="Ig kappa chain V-III region PC 4050">
    <location>
        <begin position="1"/>
        <end position="111" status="greater than"/>
    </location>
</feature>
<feature type="region of interest" description="Framework-1">
    <location>
        <begin position="1"/>
        <end position="23"/>
    </location>
</feature>
<feature type="region of interest" description="Complementarity-determining-1">
    <location>
        <begin position="24"/>
        <end position="38"/>
    </location>
</feature>
<feature type="region of interest" description="Framework-2">
    <location>
        <begin position="39"/>
        <end position="53"/>
    </location>
</feature>
<feature type="region of interest" description="Complementarity-determining-2">
    <location>
        <begin position="54"/>
        <end position="60"/>
    </location>
</feature>
<feature type="region of interest" description="Framework-3">
    <location>
        <begin position="61"/>
        <end position="92"/>
    </location>
</feature>
<feature type="region of interest" description="Complementarity-determining-3">
    <location>
        <begin position="93"/>
        <end position="101"/>
    </location>
</feature>
<feature type="region of interest" description="Framework-4">
    <location>
        <begin position="102"/>
        <end position="111"/>
    </location>
</feature>
<feature type="disulfide bond" evidence="1">
    <location>
        <begin position="23"/>
        <end position="92"/>
    </location>
</feature>
<feature type="non-terminal residue">
    <location>
        <position position="111"/>
    </location>
</feature>
<reference key="1">
    <citation type="journal article" date="1978" name="Nature">
        <title>Rearrangement of genetic information may produce immunoglobulin diversity.</title>
        <authorList>
            <person name="Weigert M."/>
            <person name="Gatmaitan L."/>
            <person name="Loh E."/>
            <person name="Schilling J."/>
            <person name="Hood L.E."/>
        </authorList>
    </citation>
    <scope>PROTEIN SEQUENCE</scope>
</reference>
<sequence>NIVLTQSPASLAVSLGQRATISCRASESVDSYGNSFMHWYQQKPGQPPKLLIYLASNLESGVPARFSGSGSRTDFTLTIDPVEADDAATYYCQQNNEDPLTFGAGTKLELK</sequence>
<accession>P01663</accession>
<dbReference type="PDB" id="1ACY">
    <property type="method" value="X-ray"/>
    <property type="resolution" value="3.00 A"/>
    <property type="chains" value="L=1-111"/>
</dbReference>
<dbReference type="PDBsum" id="1ACY"/>
<dbReference type="SMR" id="P01663"/>
<dbReference type="FunCoup" id="P01663">
    <property type="interactions" value="756"/>
</dbReference>
<dbReference type="InParanoid" id="P01663"/>
<dbReference type="Proteomes" id="UP000000589">
    <property type="component" value="Unplaced"/>
</dbReference>
<dbReference type="RNAct" id="P01663">
    <property type="molecule type" value="protein"/>
</dbReference>
<dbReference type="GO" id="GO:0019814">
    <property type="term" value="C:immunoglobulin complex"/>
    <property type="evidence" value="ECO:0000318"/>
    <property type="project" value="GO_Central"/>
</dbReference>
<dbReference type="GO" id="GO:0002250">
    <property type="term" value="P:adaptive immune response"/>
    <property type="evidence" value="ECO:0007669"/>
    <property type="project" value="UniProtKB-KW"/>
</dbReference>
<dbReference type="GO" id="GO:0006955">
    <property type="term" value="P:immune response"/>
    <property type="evidence" value="ECO:0000318"/>
    <property type="project" value="GO_Central"/>
</dbReference>
<dbReference type="CDD" id="cd04980">
    <property type="entry name" value="IgV_L_kappa"/>
    <property type="match status" value="1"/>
</dbReference>
<dbReference type="FunFam" id="2.60.40.10:FF:000350">
    <property type="entry name" value="Immunoglobulin kappa chain variable 18-36"/>
    <property type="match status" value="1"/>
</dbReference>
<dbReference type="Gene3D" id="2.60.40.10">
    <property type="entry name" value="Immunoglobulins"/>
    <property type="match status" value="1"/>
</dbReference>
<dbReference type="InterPro" id="IPR007110">
    <property type="entry name" value="Ig-like_dom"/>
</dbReference>
<dbReference type="InterPro" id="IPR036179">
    <property type="entry name" value="Ig-like_dom_sf"/>
</dbReference>
<dbReference type="InterPro" id="IPR013783">
    <property type="entry name" value="Ig-like_fold"/>
</dbReference>
<dbReference type="InterPro" id="IPR003599">
    <property type="entry name" value="Ig_sub"/>
</dbReference>
<dbReference type="InterPro" id="IPR013106">
    <property type="entry name" value="Ig_V-set"/>
</dbReference>
<dbReference type="InterPro" id="IPR050150">
    <property type="entry name" value="IgV_Light_Chain"/>
</dbReference>
<dbReference type="PANTHER" id="PTHR23267">
    <property type="entry name" value="IMMUNOGLOBULIN LIGHT CHAIN"/>
    <property type="match status" value="1"/>
</dbReference>
<dbReference type="Pfam" id="PF07686">
    <property type="entry name" value="V-set"/>
    <property type="match status" value="1"/>
</dbReference>
<dbReference type="SMART" id="SM00409">
    <property type="entry name" value="IG"/>
    <property type="match status" value="1"/>
</dbReference>
<dbReference type="SMART" id="SM00406">
    <property type="entry name" value="IGv"/>
    <property type="match status" value="1"/>
</dbReference>
<dbReference type="SUPFAM" id="SSF48726">
    <property type="entry name" value="Immunoglobulin"/>
    <property type="match status" value="1"/>
</dbReference>
<dbReference type="PROSITE" id="PS50835">
    <property type="entry name" value="IG_LIKE"/>
    <property type="match status" value="1"/>
</dbReference>
<keyword id="KW-0002">3D-structure</keyword>
<keyword id="KW-1064">Adaptive immunity</keyword>
<keyword id="KW-0903">Direct protein sequencing</keyword>
<keyword id="KW-1015">Disulfide bond</keyword>
<keyword id="KW-0391">Immunity</keyword>
<keyword id="KW-1280">Immunoglobulin</keyword>
<keyword id="KW-1185">Reference proteome</keyword>
<protein>
    <recommendedName>
        <fullName>Ig kappa chain V-III region PC 4050</fullName>
    </recommendedName>
</protein>
<proteinExistence type="evidence at protein level"/>
<evidence type="ECO:0000255" key="1">
    <source>
        <dbReference type="PROSITE-ProRule" id="PRU00114"/>
    </source>
</evidence>
<organism>
    <name type="scientific">Mus musculus</name>
    <name type="common">Mouse</name>
    <dbReference type="NCBI Taxonomy" id="10090"/>
    <lineage>
        <taxon>Eukaryota</taxon>
        <taxon>Metazoa</taxon>
        <taxon>Chordata</taxon>
        <taxon>Craniata</taxon>
        <taxon>Vertebrata</taxon>
        <taxon>Euteleostomi</taxon>
        <taxon>Mammalia</taxon>
        <taxon>Eutheria</taxon>
        <taxon>Euarchontoglires</taxon>
        <taxon>Glires</taxon>
        <taxon>Rodentia</taxon>
        <taxon>Myomorpha</taxon>
        <taxon>Muroidea</taxon>
        <taxon>Muridae</taxon>
        <taxon>Murinae</taxon>
        <taxon>Mus</taxon>
        <taxon>Mus</taxon>
    </lineage>
</organism>